<dbReference type="EMBL" id="CP000553">
    <property type="protein sequence ID" value="ABM75571.1"/>
    <property type="molecule type" value="Genomic_DNA"/>
</dbReference>
<dbReference type="RefSeq" id="WP_011293874.1">
    <property type="nucleotide sequence ID" value="NC_008819.1"/>
</dbReference>
<dbReference type="SMR" id="A2C261"/>
<dbReference type="KEGG" id="pme:NATL1_10131"/>
<dbReference type="eggNOG" id="COG0238">
    <property type="taxonomic scope" value="Bacteria"/>
</dbReference>
<dbReference type="HOGENOM" id="CLU_148710_2_3_3"/>
<dbReference type="Proteomes" id="UP000002592">
    <property type="component" value="Chromosome"/>
</dbReference>
<dbReference type="GO" id="GO:0022627">
    <property type="term" value="C:cytosolic small ribosomal subunit"/>
    <property type="evidence" value="ECO:0007669"/>
    <property type="project" value="TreeGrafter"/>
</dbReference>
<dbReference type="GO" id="GO:0070181">
    <property type="term" value="F:small ribosomal subunit rRNA binding"/>
    <property type="evidence" value="ECO:0007669"/>
    <property type="project" value="TreeGrafter"/>
</dbReference>
<dbReference type="GO" id="GO:0003735">
    <property type="term" value="F:structural constituent of ribosome"/>
    <property type="evidence" value="ECO:0007669"/>
    <property type="project" value="InterPro"/>
</dbReference>
<dbReference type="GO" id="GO:0006412">
    <property type="term" value="P:translation"/>
    <property type="evidence" value="ECO:0007669"/>
    <property type="project" value="UniProtKB-UniRule"/>
</dbReference>
<dbReference type="FunFam" id="4.10.640.10:FF:000002">
    <property type="entry name" value="30S ribosomal protein S18, chloroplastic"/>
    <property type="match status" value="1"/>
</dbReference>
<dbReference type="Gene3D" id="4.10.640.10">
    <property type="entry name" value="Ribosomal protein S18"/>
    <property type="match status" value="1"/>
</dbReference>
<dbReference type="HAMAP" id="MF_00270">
    <property type="entry name" value="Ribosomal_bS18"/>
    <property type="match status" value="1"/>
</dbReference>
<dbReference type="InterPro" id="IPR001648">
    <property type="entry name" value="Ribosomal_bS18"/>
</dbReference>
<dbReference type="InterPro" id="IPR018275">
    <property type="entry name" value="Ribosomal_bS18_CS"/>
</dbReference>
<dbReference type="InterPro" id="IPR036870">
    <property type="entry name" value="Ribosomal_bS18_sf"/>
</dbReference>
<dbReference type="NCBIfam" id="TIGR00165">
    <property type="entry name" value="S18"/>
    <property type="match status" value="1"/>
</dbReference>
<dbReference type="PANTHER" id="PTHR13479">
    <property type="entry name" value="30S RIBOSOMAL PROTEIN S18"/>
    <property type="match status" value="1"/>
</dbReference>
<dbReference type="PANTHER" id="PTHR13479:SF40">
    <property type="entry name" value="SMALL RIBOSOMAL SUBUNIT PROTEIN BS18M"/>
    <property type="match status" value="1"/>
</dbReference>
<dbReference type="Pfam" id="PF01084">
    <property type="entry name" value="Ribosomal_S18"/>
    <property type="match status" value="1"/>
</dbReference>
<dbReference type="PRINTS" id="PR00974">
    <property type="entry name" value="RIBOSOMALS18"/>
</dbReference>
<dbReference type="SUPFAM" id="SSF46911">
    <property type="entry name" value="Ribosomal protein S18"/>
    <property type="match status" value="1"/>
</dbReference>
<dbReference type="PROSITE" id="PS00057">
    <property type="entry name" value="RIBOSOMAL_S18"/>
    <property type="match status" value="1"/>
</dbReference>
<gene>
    <name evidence="1" type="primary">rpsR</name>
    <name evidence="1" type="synonym">rps18</name>
    <name type="ordered locus">NATL1_10131</name>
</gene>
<reference key="1">
    <citation type="journal article" date="2007" name="PLoS Genet.">
        <title>Patterns and implications of gene gain and loss in the evolution of Prochlorococcus.</title>
        <authorList>
            <person name="Kettler G.C."/>
            <person name="Martiny A.C."/>
            <person name="Huang K."/>
            <person name="Zucker J."/>
            <person name="Coleman M.L."/>
            <person name="Rodrigue S."/>
            <person name="Chen F."/>
            <person name="Lapidus A."/>
            <person name="Ferriera S."/>
            <person name="Johnson J."/>
            <person name="Steglich C."/>
            <person name="Church G.M."/>
            <person name="Richardson P."/>
            <person name="Chisholm S.W."/>
        </authorList>
    </citation>
    <scope>NUCLEOTIDE SEQUENCE [LARGE SCALE GENOMIC DNA]</scope>
    <source>
        <strain>NATL1A</strain>
    </source>
</reference>
<proteinExistence type="inferred from homology"/>
<feature type="chain" id="PRO_1000003558" description="Small ribosomal subunit protein bS18">
    <location>
        <begin position="1"/>
        <end position="73"/>
    </location>
</feature>
<sequence length="73" mass="8275">MTNSLFKQKLSPIKPGDPIDYKDVELLKKFITDRGKILPRRLTGLTAKQQRDLTTAVKRARIIALLPFVNPEG</sequence>
<name>RS18_PROM1</name>
<comment type="function">
    <text evidence="1">Binds as a heterodimer with protein bS6 to the central domain of the 16S rRNA, where it helps stabilize the platform of the 30S subunit.</text>
</comment>
<comment type="subunit">
    <text evidence="1">Part of the 30S ribosomal subunit. Forms a tight heterodimer with protein bS6.</text>
</comment>
<comment type="similarity">
    <text evidence="1">Belongs to the bacterial ribosomal protein bS18 family.</text>
</comment>
<organism>
    <name type="scientific">Prochlorococcus marinus (strain NATL1A)</name>
    <dbReference type="NCBI Taxonomy" id="167555"/>
    <lineage>
        <taxon>Bacteria</taxon>
        <taxon>Bacillati</taxon>
        <taxon>Cyanobacteriota</taxon>
        <taxon>Cyanophyceae</taxon>
        <taxon>Synechococcales</taxon>
        <taxon>Prochlorococcaceae</taxon>
        <taxon>Prochlorococcus</taxon>
    </lineage>
</organism>
<evidence type="ECO:0000255" key="1">
    <source>
        <dbReference type="HAMAP-Rule" id="MF_00270"/>
    </source>
</evidence>
<evidence type="ECO:0000305" key="2"/>
<accession>A2C261</accession>
<keyword id="KW-0687">Ribonucleoprotein</keyword>
<keyword id="KW-0689">Ribosomal protein</keyword>
<keyword id="KW-0694">RNA-binding</keyword>
<keyword id="KW-0699">rRNA-binding</keyword>
<protein>
    <recommendedName>
        <fullName evidence="1">Small ribosomal subunit protein bS18</fullName>
    </recommendedName>
    <alternativeName>
        <fullName evidence="2">30S ribosomal protein S18</fullName>
    </alternativeName>
</protein>